<comment type="function">
    <text evidence="1">Catalyzes a salvage reaction resulting in the formation of AMP, that is energically less costly than de novo synthesis.</text>
</comment>
<comment type="catalytic activity">
    <reaction evidence="1">
        <text>AMP + diphosphate = 5-phospho-alpha-D-ribose 1-diphosphate + adenine</text>
        <dbReference type="Rhea" id="RHEA:16609"/>
        <dbReference type="ChEBI" id="CHEBI:16708"/>
        <dbReference type="ChEBI" id="CHEBI:33019"/>
        <dbReference type="ChEBI" id="CHEBI:58017"/>
        <dbReference type="ChEBI" id="CHEBI:456215"/>
        <dbReference type="EC" id="2.4.2.7"/>
    </reaction>
</comment>
<comment type="pathway">
    <text evidence="1">Purine metabolism; AMP biosynthesis via salvage pathway; AMP from adenine: step 1/1.</text>
</comment>
<comment type="subunit">
    <text evidence="1">Homodimer.</text>
</comment>
<comment type="subcellular location">
    <subcellularLocation>
        <location evidence="1">Cytoplasm</location>
    </subcellularLocation>
</comment>
<comment type="similarity">
    <text evidence="1">Belongs to the purine/pyrimidine phosphoribosyltransferase family.</text>
</comment>
<name>APT_PHOLL</name>
<feature type="chain" id="PRO_0000149427" description="Adenine phosphoribosyltransferase">
    <location>
        <begin position="1"/>
        <end position="183"/>
    </location>
</feature>
<reference key="1">
    <citation type="journal article" date="2003" name="Nat. Biotechnol.">
        <title>The genome sequence of the entomopathogenic bacterium Photorhabdus luminescens.</title>
        <authorList>
            <person name="Duchaud E."/>
            <person name="Rusniok C."/>
            <person name="Frangeul L."/>
            <person name="Buchrieser C."/>
            <person name="Givaudan A."/>
            <person name="Taourit S."/>
            <person name="Bocs S."/>
            <person name="Boursaux-Eude C."/>
            <person name="Chandler M."/>
            <person name="Charles J.-F."/>
            <person name="Dassa E."/>
            <person name="Derose R."/>
            <person name="Derzelle S."/>
            <person name="Freyssinet G."/>
            <person name="Gaudriault S."/>
            <person name="Medigue C."/>
            <person name="Lanois A."/>
            <person name="Powell K."/>
            <person name="Siguier P."/>
            <person name="Vincent R."/>
            <person name="Wingate V."/>
            <person name="Zouine M."/>
            <person name="Glaser P."/>
            <person name="Boemare N."/>
            <person name="Danchin A."/>
            <person name="Kunst F."/>
        </authorList>
    </citation>
    <scope>NUCLEOTIDE SEQUENCE [LARGE SCALE GENOMIC DNA]</scope>
    <source>
        <strain>DSM 15139 / CIP 105565 / TT01</strain>
    </source>
</reference>
<gene>
    <name evidence="1" type="primary">apt</name>
    <name type="ordered locus">plu3842</name>
</gene>
<keyword id="KW-0963">Cytoplasm</keyword>
<keyword id="KW-0328">Glycosyltransferase</keyword>
<keyword id="KW-0660">Purine salvage</keyword>
<keyword id="KW-1185">Reference proteome</keyword>
<keyword id="KW-0808">Transferase</keyword>
<protein>
    <recommendedName>
        <fullName evidence="1">Adenine phosphoribosyltransferase</fullName>
        <shortName evidence="1">APRT</shortName>
        <ecNumber evidence="1">2.4.2.7</ecNumber>
    </recommendedName>
</protein>
<organism>
    <name type="scientific">Photorhabdus laumondii subsp. laumondii (strain DSM 15139 / CIP 105565 / TT01)</name>
    <name type="common">Photorhabdus luminescens subsp. laumondii</name>
    <dbReference type="NCBI Taxonomy" id="243265"/>
    <lineage>
        <taxon>Bacteria</taxon>
        <taxon>Pseudomonadati</taxon>
        <taxon>Pseudomonadota</taxon>
        <taxon>Gammaproteobacteria</taxon>
        <taxon>Enterobacterales</taxon>
        <taxon>Morganellaceae</taxon>
        <taxon>Photorhabdus</taxon>
    </lineage>
</organism>
<accession>Q7N0N9</accession>
<evidence type="ECO:0000255" key="1">
    <source>
        <dbReference type="HAMAP-Rule" id="MF_00004"/>
    </source>
</evidence>
<dbReference type="EC" id="2.4.2.7" evidence="1"/>
<dbReference type="EMBL" id="BX571871">
    <property type="protein sequence ID" value="CAE16214.1"/>
    <property type="molecule type" value="Genomic_DNA"/>
</dbReference>
<dbReference type="RefSeq" id="WP_011147981.1">
    <property type="nucleotide sequence ID" value="NC_005126.1"/>
</dbReference>
<dbReference type="SMR" id="Q7N0N9"/>
<dbReference type="STRING" id="243265.plu3842"/>
<dbReference type="GeneID" id="48850072"/>
<dbReference type="KEGG" id="plu:plu3842"/>
<dbReference type="eggNOG" id="COG0503">
    <property type="taxonomic scope" value="Bacteria"/>
</dbReference>
<dbReference type="HOGENOM" id="CLU_063339_3_0_6"/>
<dbReference type="OrthoDB" id="9803963at2"/>
<dbReference type="UniPathway" id="UPA00588">
    <property type="reaction ID" value="UER00646"/>
</dbReference>
<dbReference type="Proteomes" id="UP000002514">
    <property type="component" value="Chromosome"/>
</dbReference>
<dbReference type="GO" id="GO:0005737">
    <property type="term" value="C:cytoplasm"/>
    <property type="evidence" value="ECO:0007669"/>
    <property type="project" value="UniProtKB-SubCell"/>
</dbReference>
<dbReference type="GO" id="GO:0002055">
    <property type="term" value="F:adenine binding"/>
    <property type="evidence" value="ECO:0007669"/>
    <property type="project" value="TreeGrafter"/>
</dbReference>
<dbReference type="GO" id="GO:0003999">
    <property type="term" value="F:adenine phosphoribosyltransferase activity"/>
    <property type="evidence" value="ECO:0007669"/>
    <property type="project" value="UniProtKB-UniRule"/>
</dbReference>
<dbReference type="GO" id="GO:0016208">
    <property type="term" value="F:AMP binding"/>
    <property type="evidence" value="ECO:0007669"/>
    <property type="project" value="TreeGrafter"/>
</dbReference>
<dbReference type="GO" id="GO:0006168">
    <property type="term" value="P:adenine salvage"/>
    <property type="evidence" value="ECO:0007669"/>
    <property type="project" value="InterPro"/>
</dbReference>
<dbReference type="GO" id="GO:0044209">
    <property type="term" value="P:AMP salvage"/>
    <property type="evidence" value="ECO:0007669"/>
    <property type="project" value="UniProtKB-UniRule"/>
</dbReference>
<dbReference type="GO" id="GO:0006166">
    <property type="term" value="P:purine ribonucleoside salvage"/>
    <property type="evidence" value="ECO:0007669"/>
    <property type="project" value="UniProtKB-KW"/>
</dbReference>
<dbReference type="CDD" id="cd06223">
    <property type="entry name" value="PRTases_typeI"/>
    <property type="match status" value="1"/>
</dbReference>
<dbReference type="FunFam" id="3.40.50.2020:FF:000004">
    <property type="entry name" value="Adenine phosphoribosyltransferase"/>
    <property type="match status" value="1"/>
</dbReference>
<dbReference type="Gene3D" id="3.40.50.2020">
    <property type="match status" value="1"/>
</dbReference>
<dbReference type="HAMAP" id="MF_00004">
    <property type="entry name" value="Aden_phosphoribosyltr"/>
    <property type="match status" value="1"/>
</dbReference>
<dbReference type="InterPro" id="IPR005764">
    <property type="entry name" value="Ade_phspho_trans"/>
</dbReference>
<dbReference type="InterPro" id="IPR000836">
    <property type="entry name" value="PRibTrfase_dom"/>
</dbReference>
<dbReference type="InterPro" id="IPR029057">
    <property type="entry name" value="PRTase-like"/>
</dbReference>
<dbReference type="InterPro" id="IPR050054">
    <property type="entry name" value="UPRTase/APRTase"/>
</dbReference>
<dbReference type="NCBIfam" id="TIGR01090">
    <property type="entry name" value="apt"/>
    <property type="match status" value="1"/>
</dbReference>
<dbReference type="NCBIfam" id="NF002632">
    <property type="entry name" value="PRK02304.1-1"/>
    <property type="match status" value="1"/>
</dbReference>
<dbReference type="NCBIfam" id="NF002634">
    <property type="entry name" value="PRK02304.1-3"/>
    <property type="match status" value="1"/>
</dbReference>
<dbReference type="NCBIfam" id="NF002636">
    <property type="entry name" value="PRK02304.1-5"/>
    <property type="match status" value="1"/>
</dbReference>
<dbReference type="PANTHER" id="PTHR32315">
    <property type="entry name" value="ADENINE PHOSPHORIBOSYLTRANSFERASE"/>
    <property type="match status" value="1"/>
</dbReference>
<dbReference type="PANTHER" id="PTHR32315:SF3">
    <property type="entry name" value="ADENINE PHOSPHORIBOSYLTRANSFERASE"/>
    <property type="match status" value="1"/>
</dbReference>
<dbReference type="Pfam" id="PF00156">
    <property type="entry name" value="Pribosyltran"/>
    <property type="match status" value="1"/>
</dbReference>
<dbReference type="SUPFAM" id="SSF53271">
    <property type="entry name" value="PRTase-like"/>
    <property type="match status" value="1"/>
</dbReference>
<dbReference type="PROSITE" id="PS00103">
    <property type="entry name" value="PUR_PYR_PR_TRANSFER"/>
    <property type="match status" value="1"/>
</dbReference>
<proteinExistence type="inferred from homology"/>
<sequence>MTANAQQLQFIKDSIETIPDYPKPGVLFRDITTLLDNPLAYQATIDLLVERYQGKGITKIVGTEARGFLFGAPVALRLGVGFIPVRKAGKLPRETLSETYNLEYGTDTLEMHKDSVRENDKVLVIDDLLATGGTVEATVRLIRRLGGEVSEAAFIIGLLGLGGVERLQRQGVSSFTLLEFPDH</sequence>